<keyword id="KW-0030">Aminoacyl-tRNA synthetase</keyword>
<keyword id="KW-0067">ATP-binding</keyword>
<keyword id="KW-0963">Cytoplasm</keyword>
<keyword id="KW-0436">Ligase</keyword>
<keyword id="KW-0547">Nucleotide-binding</keyword>
<keyword id="KW-0648">Protein biosynthesis</keyword>
<keyword id="KW-1185">Reference proteome</keyword>
<name>SYL_ALIB4</name>
<protein>
    <recommendedName>
        <fullName evidence="1">Leucine--tRNA ligase</fullName>
        <ecNumber evidence="1">6.1.1.4</ecNumber>
    </recommendedName>
    <alternativeName>
        <fullName evidence="1">Leucyl-tRNA synthetase</fullName>
        <shortName evidence="1">LeuRS</shortName>
    </alternativeName>
</protein>
<proteinExistence type="inferred from homology"/>
<feature type="chain" id="PRO_1000057341" description="Leucine--tRNA ligase">
    <location>
        <begin position="1"/>
        <end position="821"/>
    </location>
</feature>
<feature type="short sequence motif" description="'HIGH' region">
    <location>
        <begin position="40"/>
        <end position="50"/>
    </location>
</feature>
<feature type="short sequence motif" description="'KMSKS' region">
    <location>
        <begin position="586"/>
        <end position="590"/>
    </location>
</feature>
<feature type="binding site" evidence="1">
    <location>
        <position position="589"/>
    </location>
    <ligand>
        <name>ATP</name>
        <dbReference type="ChEBI" id="CHEBI:30616"/>
    </ligand>
</feature>
<sequence length="821" mass="94469">MEYISKDIEKKWQNFWSENQSFEPSSSKTKEKKYILSMFPYPSGRIHMGHVRNYCIGDAFARHFRKSDFNVLHPIGWDSFGMPAENAAIKHKLHPKKWTYENIDYMRDELKSLGLSFSKNREFATSDELYTKWEQEFIIKMYEAGIIYRKSATVNWCPHDQTVLANEQLEEGCCWRCGTEVVQKEMPGYYIGITKYAQELLDDLEKLKEDWPSQVLTMQENWIGRSEGLEFKFDLSKESRAKLERAFTKYFVFTTRPDTIYGVSYSALAPEHPIVKYIVEKNLLPEKKIKAIKAMQKIPERDRATQEKEGIDLEIEVMHPLTGKTIPVWVANFVLSSYGGGAVMAVPAHDQRDFEFAKKYNLPIKQVIVGPDGIIENQTEAYTAEGRLIESENFTGVTNIEAKKAIIYHFEQNSFGIKKVNYKLRDWGVSRQRYWGAPIPFIHCEKCGLVPEKIENLPVALPEDVEITGEGNPLDTHPTWKHCTCPKCGEKATRETDTLDTFVQSSWYFLRYATDNKKWNEVGISKEDSDYWMDVDQYIGGIEHAILHLLYARFFTKVLRDLGYTNSSEPFKKLLTQGMVLKDGAKMSKSKGNVVDPDLIIDKYGADTARLFILFAAPPTKELEWNDSAVEGAFRFIKKFFERAENVNQNGLDNFKSIDHSALSKEEKEARKKVYEALLKSNEVFTKTYTFNTLIASCMEALNALQTQKNDSIWAEGYYILTNILEPIIPHACWELSKKLFDLKNFDGKIELKEEVFALESIILAVTVNGKKRCEIEVAPDTSKDEILVKAKIASAKWLENSEILKEIVVPNKLVNFVIKG</sequence>
<gene>
    <name evidence="1" type="primary">leuS</name>
    <name type="ordered locus">Abu_0402</name>
</gene>
<organism>
    <name type="scientific">Aliarcobacter butzleri (strain RM4018)</name>
    <name type="common">Arcobacter butzleri</name>
    <dbReference type="NCBI Taxonomy" id="367737"/>
    <lineage>
        <taxon>Bacteria</taxon>
        <taxon>Pseudomonadati</taxon>
        <taxon>Campylobacterota</taxon>
        <taxon>Epsilonproteobacteria</taxon>
        <taxon>Campylobacterales</taxon>
        <taxon>Arcobacteraceae</taxon>
        <taxon>Aliarcobacter</taxon>
    </lineage>
</organism>
<evidence type="ECO:0000255" key="1">
    <source>
        <dbReference type="HAMAP-Rule" id="MF_00049"/>
    </source>
</evidence>
<dbReference type="EC" id="6.1.1.4" evidence="1"/>
<dbReference type="EMBL" id="CP000361">
    <property type="protein sequence ID" value="ABV66677.1"/>
    <property type="molecule type" value="Genomic_DNA"/>
</dbReference>
<dbReference type="RefSeq" id="WP_012012229.1">
    <property type="nucleotide sequence ID" value="NC_009850.1"/>
</dbReference>
<dbReference type="SMR" id="A8ERV3"/>
<dbReference type="STRING" id="367737.Abu_0402"/>
<dbReference type="GeneID" id="24305365"/>
<dbReference type="KEGG" id="abu:Abu_0402"/>
<dbReference type="eggNOG" id="COG0495">
    <property type="taxonomic scope" value="Bacteria"/>
</dbReference>
<dbReference type="HOGENOM" id="CLU_004427_0_0_7"/>
<dbReference type="Proteomes" id="UP000001136">
    <property type="component" value="Chromosome"/>
</dbReference>
<dbReference type="GO" id="GO:0005829">
    <property type="term" value="C:cytosol"/>
    <property type="evidence" value="ECO:0007669"/>
    <property type="project" value="TreeGrafter"/>
</dbReference>
<dbReference type="GO" id="GO:0002161">
    <property type="term" value="F:aminoacyl-tRNA deacylase activity"/>
    <property type="evidence" value="ECO:0007669"/>
    <property type="project" value="InterPro"/>
</dbReference>
<dbReference type="GO" id="GO:0005524">
    <property type="term" value="F:ATP binding"/>
    <property type="evidence" value="ECO:0007669"/>
    <property type="project" value="UniProtKB-UniRule"/>
</dbReference>
<dbReference type="GO" id="GO:0004823">
    <property type="term" value="F:leucine-tRNA ligase activity"/>
    <property type="evidence" value="ECO:0007669"/>
    <property type="project" value="UniProtKB-UniRule"/>
</dbReference>
<dbReference type="GO" id="GO:0006429">
    <property type="term" value="P:leucyl-tRNA aminoacylation"/>
    <property type="evidence" value="ECO:0007669"/>
    <property type="project" value="UniProtKB-UniRule"/>
</dbReference>
<dbReference type="CDD" id="cd00812">
    <property type="entry name" value="LeuRS_core"/>
    <property type="match status" value="1"/>
</dbReference>
<dbReference type="FunFam" id="1.10.730.10:FF:000002">
    <property type="entry name" value="Leucine--tRNA ligase"/>
    <property type="match status" value="1"/>
</dbReference>
<dbReference type="FunFam" id="3.40.50.620:FF:000003">
    <property type="entry name" value="Leucine--tRNA ligase"/>
    <property type="match status" value="1"/>
</dbReference>
<dbReference type="FunFam" id="3.40.50.620:FF:000056">
    <property type="entry name" value="Leucine--tRNA ligase"/>
    <property type="match status" value="1"/>
</dbReference>
<dbReference type="Gene3D" id="3.10.20.590">
    <property type="match status" value="1"/>
</dbReference>
<dbReference type="Gene3D" id="3.40.50.620">
    <property type="entry name" value="HUPs"/>
    <property type="match status" value="2"/>
</dbReference>
<dbReference type="Gene3D" id="1.10.730.10">
    <property type="entry name" value="Isoleucyl-tRNA Synthetase, Domain 1"/>
    <property type="match status" value="1"/>
</dbReference>
<dbReference type="HAMAP" id="MF_00049_B">
    <property type="entry name" value="Leu_tRNA_synth_B"/>
    <property type="match status" value="1"/>
</dbReference>
<dbReference type="InterPro" id="IPR001412">
    <property type="entry name" value="aa-tRNA-synth_I_CS"/>
</dbReference>
<dbReference type="InterPro" id="IPR002302">
    <property type="entry name" value="Leu-tRNA-ligase"/>
</dbReference>
<dbReference type="InterPro" id="IPR025709">
    <property type="entry name" value="Leu_tRNA-synth_edit"/>
</dbReference>
<dbReference type="InterPro" id="IPR015413">
    <property type="entry name" value="Methionyl/Leucyl_tRNA_Synth"/>
</dbReference>
<dbReference type="InterPro" id="IPR014729">
    <property type="entry name" value="Rossmann-like_a/b/a_fold"/>
</dbReference>
<dbReference type="InterPro" id="IPR009080">
    <property type="entry name" value="tRNAsynth_Ia_anticodon-bd"/>
</dbReference>
<dbReference type="InterPro" id="IPR009008">
    <property type="entry name" value="Val/Leu/Ile-tRNA-synth_edit"/>
</dbReference>
<dbReference type="NCBIfam" id="TIGR00396">
    <property type="entry name" value="leuS_bact"/>
    <property type="match status" value="1"/>
</dbReference>
<dbReference type="PANTHER" id="PTHR43740:SF2">
    <property type="entry name" value="LEUCINE--TRNA LIGASE, MITOCHONDRIAL"/>
    <property type="match status" value="1"/>
</dbReference>
<dbReference type="PANTHER" id="PTHR43740">
    <property type="entry name" value="LEUCYL-TRNA SYNTHETASE"/>
    <property type="match status" value="1"/>
</dbReference>
<dbReference type="Pfam" id="PF13603">
    <property type="entry name" value="tRNA-synt_1_2"/>
    <property type="match status" value="1"/>
</dbReference>
<dbReference type="Pfam" id="PF09334">
    <property type="entry name" value="tRNA-synt_1g"/>
    <property type="match status" value="2"/>
</dbReference>
<dbReference type="PRINTS" id="PR00985">
    <property type="entry name" value="TRNASYNTHLEU"/>
</dbReference>
<dbReference type="SUPFAM" id="SSF47323">
    <property type="entry name" value="Anticodon-binding domain of a subclass of class I aminoacyl-tRNA synthetases"/>
    <property type="match status" value="1"/>
</dbReference>
<dbReference type="SUPFAM" id="SSF52374">
    <property type="entry name" value="Nucleotidylyl transferase"/>
    <property type="match status" value="1"/>
</dbReference>
<dbReference type="SUPFAM" id="SSF50677">
    <property type="entry name" value="ValRS/IleRS/LeuRS editing domain"/>
    <property type="match status" value="1"/>
</dbReference>
<dbReference type="PROSITE" id="PS00178">
    <property type="entry name" value="AA_TRNA_LIGASE_I"/>
    <property type="match status" value="1"/>
</dbReference>
<reference key="1">
    <citation type="journal article" date="2007" name="PLoS ONE">
        <title>The complete genome sequence and analysis of the Epsilonproteobacterium Arcobacter butzleri.</title>
        <authorList>
            <person name="Miller W.G."/>
            <person name="Parker C.T."/>
            <person name="Rubenfield M."/>
            <person name="Mendz G.L."/>
            <person name="Woesten M.M.S.M."/>
            <person name="Ussery D.W."/>
            <person name="Stolz J.F."/>
            <person name="Binnewies T.T."/>
            <person name="Hallin P.F."/>
            <person name="Wang G."/>
            <person name="Malek J.A."/>
            <person name="Rogosin A."/>
            <person name="Stanker L.H."/>
            <person name="Mandrell R.E."/>
        </authorList>
    </citation>
    <scope>NUCLEOTIDE SEQUENCE [LARGE SCALE GENOMIC DNA]</scope>
    <source>
        <strain>RM4018</strain>
    </source>
</reference>
<accession>A8ERV3</accession>
<comment type="catalytic activity">
    <reaction evidence="1">
        <text>tRNA(Leu) + L-leucine + ATP = L-leucyl-tRNA(Leu) + AMP + diphosphate</text>
        <dbReference type="Rhea" id="RHEA:11688"/>
        <dbReference type="Rhea" id="RHEA-COMP:9613"/>
        <dbReference type="Rhea" id="RHEA-COMP:9622"/>
        <dbReference type="ChEBI" id="CHEBI:30616"/>
        <dbReference type="ChEBI" id="CHEBI:33019"/>
        <dbReference type="ChEBI" id="CHEBI:57427"/>
        <dbReference type="ChEBI" id="CHEBI:78442"/>
        <dbReference type="ChEBI" id="CHEBI:78494"/>
        <dbReference type="ChEBI" id="CHEBI:456215"/>
        <dbReference type="EC" id="6.1.1.4"/>
    </reaction>
</comment>
<comment type="subcellular location">
    <subcellularLocation>
        <location evidence="1">Cytoplasm</location>
    </subcellularLocation>
</comment>
<comment type="similarity">
    <text evidence="1">Belongs to the class-I aminoacyl-tRNA synthetase family.</text>
</comment>